<organism>
    <name type="scientific">Shewanella frigidimarina (strain NCIMB 400)</name>
    <dbReference type="NCBI Taxonomy" id="318167"/>
    <lineage>
        <taxon>Bacteria</taxon>
        <taxon>Pseudomonadati</taxon>
        <taxon>Pseudomonadota</taxon>
        <taxon>Gammaproteobacteria</taxon>
        <taxon>Alteromonadales</taxon>
        <taxon>Shewanellaceae</taxon>
        <taxon>Shewanella</taxon>
    </lineage>
</organism>
<accession>Q07ZX5</accession>
<keyword id="KW-0030">Aminoacyl-tRNA synthetase</keyword>
<keyword id="KW-0067">ATP-binding</keyword>
<keyword id="KW-0963">Cytoplasm</keyword>
<keyword id="KW-0436">Ligase</keyword>
<keyword id="KW-0479">Metal-binding</keyword>
<keyword id="KW-0547">Nucleotide-binding</keyword>
<keyword id="KW-0648">Protein biosynthesis</keyword>
<keyword id="KW-1185">Reference proteome</keyword>
<keyword id="KW-0862">Zinc</keyword>
<gene>
    <name evidence="1" type="primary">cysS</name>
    <name type="ordered locus">Sfri_2599</name>
</gene>
<proteinExistence type="inferred from homology"/>
<sequence length="460" mass="52307">MLKIYNSISRDKQEFKPINPGKIGMYVCGVTIYDLCHIGHGRTFVSFDMIVRYLRYIGYEVNFQRNITDVDDKIIKRAAENNESCESLTERLIAEMHQDFDALNMKRPDFEPRATLHIEEIIDMVQRLLDRDHAYVASNGDVLFSVASFPEYGQLSGQNLDQLQAGARVEIDNAKRNPMDFVLWKMSKPGEPTWESPWGPGRPGWHIECSAMNSKHLGLHFDIHGGGSDLQFPHHENEIAQSCCAHDTPYVNYWMHTGMVMVDREKMSKSLDNFFTIRDVLKHYDAETVRYFLLSGHYRSQLNYSEDNLKQARAALERLYTALKGLDLTVDAAPAEAFVAKFKSAMDDDFNTPEAYSVLFEMVREINRLKTTDMAEASALGVSLKQLADVLGLISQTPEAFFKGEGSDDEVAEIEALIVERNRARTEKDWPAADVARDRLNELGVELEDGGPSGTTWRKK</sequence>
<reference key="1">
    <citation type="submission" date="2006-08" db="EMBL/GenBank/DDBJ databases">
        <title>Complete sequence of Shewanella frigidimarina NCIMB 400.</title>
        <authorList>
            <consortium name="US DOE Joint Genome Institute"/>
            <person name="Copeland A."/>
            <person name="Lucas S."/>
            <person name="Lapidus A."/>
            <person name="Barry K."/>
            <person name="Detter J.C."/>
            <person name="Glavina del Rio T."/>
            <person name="Hammon N."/>
            <person name="Israni S."/>
            <person name="Dalin E."/>
            <person name="Tice H."/>
            <person name="Pitluck S."/>
            <person name="Fredrickson J.K."/>
            <person name="Kolker E."/>
            <person name="McCuel L.A."/>
            <person name="DiChristina T."/>
            <person name="Nealson K.H."/>
            <person name="Newman D."/>
            <person name="Tiedje J.M."/>
            <person name="Zhou J."/>
            <person name="Romine M.F."/>
            <person name="Culley D.E."/>
            <person name="Serres M."/>
            <person name="Chertkov O."/>
            <person name="Brettin T."/>
            <person name="Bruce D."/>
            <person name="Han C."/>
            <person name="Tapia R."/>
            <person name="Gilna P."/>
            <person name="Schmutz J."/>
            <person name="Larimer F."/>
            <person name="Land M."/>
            <person name="Hauser L."/>
            <person name="Kyrpides N."/>
            <person name="Mikhailova N."/>
            <person name="Richardson P."/>
        </authorList>
    </citation>
    <scope>NUCLEOTIDE SEQUENCE [LARGE SCALE GENOMIC DNA]</scope>
    <source>
        <strain>NCIMB 400</strain>
    </source>
</reference>
<dbReference type="EC" id="6.1.1.16" evidence="1"/>
<dbReference type="EMBL" id="CP000447">
    <property type="protein sequence ID" value="ABI72440.1"/>
    <property type="molecule type" value="Genomic_DNA"/>
</dbReference>
<dbReference type="RefSeq" id="WP_011638049.1">
    <property type="nucleotide sequence ID" value="NC_008345.1"/>
</dbReference>
<dbReference type="SMR" id="Q07ZX5"/>
<dbReference type="STRING" id="318167.Sfri_2599"/>
<dbReference type="KEGG" id="sfr:Sfri_2599"/>
<dbReference type="eggNOG" id="COG0215">
    <property type="taxonomic scope" value="Bacteria"/>
</dbReference>
<dbReference type="HOGENOM" id="CLU_013528_0_1_6"/>
<dbReference type="OrthoDB" id="9815130at2"/>
<dbReference type="Proteomes" id="UP000000684">
    <property type="component" value="Chromosome"/>
</dbReference>
<dbReference type="GO" id="GO:0005829">
    <property type="term" value="C:cytosol"/>
    <property type="evidence" value="ECO:0007669"/>
    <property type="project" value="TreeGrafter"/>
</dbReference>
<dbReference type="GO" id="GO:0005524">
    <property type="term" value="F:ATP binding"/>
    <property type="evidence" value="ECO:0007669"/>
    <property type="project" value="UniProtKB-UniRule"/>
</dbReference>
<dbReference type="GO" id="GO:0004817">
    <property type="term" value="F:cysteine-tRNA ligase activity"/>
    <property type="evidence" value="ECO:0007669"/>
    <property type="project" value="UniProtKB-UniRule"/>
</dbReference>
<dbReference type="GO" id="GO:0008270">
    <property type="term" value="F:zinc ion binding"/>
    <property type="evidence" value="ECO:0007669"/>
    <property type="project" value="UniProtKB-UniRule"/>
</dbReference>
<dbReference type="GO" id="GO:0006423">
    <property type="term" value="P:cysteinyl-tRNA aminoacylation"/>
    <property type="evidence" value="ECO:0007669"/>
    <property type="project" value="UniProtKB-UniRule"/>
</dbReference>
<dbReference type="CDD" id="cd07963">
    <property type="entry name" value="Anticodon_Ia_Cys"/>
    <property type="match status" value="1"/>
</dbReference>
<dbReference type="CDD" id="cd00672">
    <property type="entry name" value="CysRS_core"/>
    <property type="match status" value="1"/>
</dbReference>
<dbReference type="FunFam" id="1.20.120.1910:FF:000001">
    <property type="entry name" value="Cysteine--tRNA ligase"/>
    <property type="match status" value="1"/>
</dbReference>
<dbReference type="FunFam" id="3.40.50.620:FF:000009">
    <property type="entry name" value="Cysteine--tRNA ligase"/>
    <property type="match status" value="1"/>
</dbReference>
<dbReference type="Gene3D" id="1.20.120.1910">
    <property type="entry name" value="Cysteine-tRNA ligase, C-terminal anti-codon recognition domain"/>
    <property type="match status" value="1"/>
</dbReference>
<dbReference type="Gene3D" id="3.40.50.620">
    <property type="entry name" value="HUPs"/>
    <property type="match status" value="1"/>
</dbReference>
<dbReference type="HAMAP" id="MF_00041">
    <property type="entry name" value="Cys_tRNA_synth"/>
    <property type="match status" value="1"/>
</dbReference>
<dbReference type="InterPro" id="IPR015803">
    <property type="entry name" value="Cys-tRNA-ligase"/>
</dbReference>
<dbReference type="InterPro" id="IPR015273">
    <property type="entry name" value="Cys-tRNA-synt_Ia_DALR"/>
</dbReference>
<dbReference type="InterPro" id="IPR024909">
    <property type="entry name" value="Cys-tRNA/MSH_ligase"/>
</dbReference>
<dbReference type="InterPro" id="IPR056411">
    <property type="entry name" value="CysS_C"/>
</dbReference>
<dbReference type="InterPro" id="IPR014729">
    <property type="entry name" value="Rossmann-like_a/b/a_fold"/>
</dbReference>
<dbReference type="InterPro" id="IPR032678">
    <property type="entry name" value="tRNA-synt_1_cat_dom"/>
</dbReference>
<dbReference type="InterPro" id="IPR009080">
    <property type="entry name" value="tRNAsynth_Ia_anticodon-bd"/>
</dbReference>
<dbReference type="NCBIfam" id="TIGR00435">
    <property type="entry name" value="cysS"/>
    <property type="match status" value="1"/>
</dbReference>
<dbReference type="PANTHER" id="PTHR10890:SF3">
    <property type="entry name" value="CYSTEINE--TRNA LIGASE, CYTOPLASMIC"/>
    <property type="match status" value="1"/>
</dbReference>
<dbReference type="PANTHER" id="PTHR10890">
    <property type="entry name" value="CYSTEINYL-TRNA SYNTHETASE"/>
    <property type="match status" value="1"/>
</dbReference>
<dbReference type="Pfam" id="PF23493">
    <property type="entry name" value="CysS_C"/>
    <property type="match status" value="1"/>
</dbReference>
<dbReference type="Pfam" id="PF09190">
    <property type="entry name" value="DALR_2"/>
    <property type="match status" value="1"/>
</dbReference>
<dbReference type="Pfam" id="PF01406">
    <property type="entry name" value="tRNA-synt_1e"/>
    <property type="match status" value="1"/>
</dbReference>
<dbReference type="PRINTS" id="PR00983">
    <property type="entry name" value="TRNASYNTHCYS"/>
</dbReference>
<dbReference type="SMART" id="SM00840">
    <property type="entry name" value="DALR_2"/>
    <property type="match status" value="1"/>
</dbReference>
<dbReference type="SUPFAM" id="SSF47323">
    <property type="entry name" value="Anticodon-binding domain of a subclass of class I aminoacyl-tRNA synthetases"/>
    <property type="match status" value="1"/>
</dbReference>
<dbReference type="SUPFAM" id="SSF52374">
    <property type="entry name" value="Nucleotidylyl transferase"/>
    <property type="match status" value="1"/>
</dbReference>
<protein>
    <recommendedName>
        <fullName evidence="1">Cysteine--tRNA ligase</fullName>
        <ecNumber evidence="1">6.1.1.16</ecNumber>
    </recommendedName>
    <alternativeName>
        <fullName evidence="1">Cysteinyl-tRNA synthetase</fullName>
        <shortName evidence="1">CysRS</shortName>
    </alternativeName>
</protein>
<name>SYC_SHEFN</name>
<comment type="catalytic activity">
    <reaction evidence="1">
        <text>tRNA(Cys) + L-cysteine + ATP = L-cysteinyl-tRNA(Cys) + AMP + diphosphate</text>
        <dbReference type="Rhea" id="RHEA:17773"/>
        <dbReference type="Rhea" id="RHEA-COMP:9661"/>
        <dbReference type="Rhea" id="RHEA-COMP:9679"/>
        <dbReference type="ChEBI" id="CHEBI:30616"/>
        <dbReference type="ChEBI" id="CHEBI:33019"/>
        <dbReference type="ChEBI" id="CHEBI:35235"/>
        <dbReference type="ChEBI" id="CHEBI:78442"/>
        <dbReference type="ChEBI" id="CHEBI:78517"/>
        <dbReference type="ChEBI" id="CHEBI:456215"/>
        <dbReference type="EC" id="6.1.1.16"/>
    </reaction>
</comment>
<comment type="cofactor">
    <cofactor evidence="1">
        <name>Zn(2+)</name>
        <dbReference type="ChEBI" id="CHEBI:29105"/>
    </cofactor>
    <text evidence="1">Binds 1 zinc ion per subunit.</text>
</comment>
<comment type="subunit">
    <text evidence="1">Monomer.</text>
</comment>
<comment type="subcellular location">
    <subcellularLocation>
        <location evidence="1">Cytoplasm</location>
    </subcellularLocation>
</comment>
<comment type="similarity">
    <text evidence="1">Belongs to the class-I aminoacyl-tRNA synthetase family.</text>
</comment>
<feature type="chain" id="PRO_0000332902" description="Cysteine--tRNA ligase">
    <location>
        <begin position="1"/>
        <end position="460"/>
    </location>
</feature>
<feature type="short sequence motif" description="'HIGH' region">
    <location>
        <begin position="30"/>
        <end position="40"/>
    </location>
</feature>
<feature type="short sequence motif" description="'KMSKS' region">
    <location>
        <begin position="266"/>
        <end position="270"/>
    </location>
</feature>
<feature type="binding site" evidence="1">
    <location>
        <position position="28"/>
    </location>
    <ligand>
        <name>Zn(2+)</name>
        <dbReference type="ChEBI" id="CHEBI:29105"/>
    </ligand>
</feature>
<feature type="binding site" evidence="1">
    <location>
        <position position="209"/>
    </location>
    <ligand>
        <name>Zn(2+)</name>
        <dbReference type="ChEBI" id="CHEBI:29105"/>
    </ligand>
</feature>
<feature type="binding site" evidence="1">
    <location>
        <position position="234"/>
    </location>
    <ligand>
        <name>Zn(2+)</name>
        <dbReference type="ChEBI" id="CHEBI:29105"/>
    </ligand>
</feature>
<feature type="binding site" evidence="1">
    <location>
        <position position="238"/>
    </location>
    <ligand>
        <name>Zn(2+)</name>
        <dbReference type="ChEBI" id="CHEBI:29105"/>
    </ligand>
</feature>
<feature type="binding site" evidence="1">
    <location>
        <position position="269"/>
    </location>
    <ligand>
        <name>ATP</name>
        <dbReference type="ChEBI" id="CHEBI:30616"/>
    </ligand>
</feature>
<evidence type="ECO:0000255" key="1">
    <source>
        <dbReference type="HAMAP-Rule" id="MF_00041"/>
    </source>
</evidence>